<proteinExistence type="inferred from homology"/>
<reference key="1">
    <citation type="submission" date="2008-04" db="EMBL/GenBank/DDBJ databases">
        <title>Complete sequence of chromosome 1 of Burkholderia ambifaria MC40-6.</title>
        <authorList>
            <person name="Copeland A."/>
            <person name="Lucas S."/>
            <person name="Lapidus A."/>
            <person name="Glavina del Rio T."/>
            <person name="Dalin E."/>
            <person name="Tice H."/>
            <person name="Pitluck S."/>
            <person name="Chain P."/>
            <person name="Malfatti S."/>
            <person name="Shin M."/>
            <person name="Vergez L."/>
            <person name="Lang D."/>
            <person name="Schmutz J."/>
            <person name="Larimer F."/>
            <person name="Land M."/>
            <person name="Hauser L."/>
            <person name="Kyrpides N."/>
            <person name="Lykidis A."/>
            <person name="Ramette A."/>
            <person name="Konstantinidis K."/>
            <person name="Tiedje J."/>
            <person name="Richardson P."/>
        </authorList>
    </citation>
    <scope>NUCLEOTIDE SEQUENCE [LARGE SCALE GENOMIC DNA]</scope>
    <source>
        <strain>MC40-6</strain>
    </source>
</reference>
<feature type="chain" id="PRO_1000193001" description="Phosphoribosylformylglycinamidine cyclo-ligase">
    <location>
        <begin position="1"/>
        <end position="351"/>
    </location>
</feature>
<keyword id="KW-0067">ATP-binding</keyword>
<keyword id="KW-0963">Cytoplasm</keyword>
<keyword id="KW-0436">Ligase</keyword>
<keyword id="KW-0547">Nucleotide-binding</keyword>
<keyword id="KW-0658">Purine biosynthesis</keyword>
<protein>
    <recommendedName>
        <fullName evidence="1">Phosphoribosylformylglycinamidine cyclo-ligase</fullName>
        <ecNumber evidence="1">6.3.3.1</ecNumber>
    </recommendedName>
    <alternativeName>
        <fullName evidence="1">AIR synthase</fullName>
    </alternativeName>
    <alternativeName>
        <fullName evidence="1">AIRS</fullName>
    </alternativeName>
    <alternativeName>
        <fullName evidence="1">Phosphoribosyl-aminoimidazole synthetase</fullName>
    </alternativeName>
</protein>
<organism>
    <name type="scientific">Burkholderia ambifaria (strain MC40-6)</name>
    <dbReference type="NCBI Taxonomy" id="398577"/>
    <lineage>
        <taxon>Bacteria</taxon>
        <taxon>Pseudomonadati</taxon>
        <taxon>Pseudomonadota</taxon>
        <taxon>Betaproteobacteria</taxon>
        <taxon>Burkholderiales</taxon>
        <taxon>Burkholderiaceae</taxon>
        <taxon>Burkholderia</taxon>
        <taxon>Burkholderia cepacia complex</taxon>
    </lineage>
</organism>
<sequence>MNPPKSAPDAQGLSYRDAGVDIDAGDALIDKIKPFAKKTLRDGVLGGIGGFGALFEVPKKYKEPVLVSGTDGVGTKLKLAFHLNKHDTVGQDLVAMSVNDILVQGAEPLFFLDYFACGKLDVDTAATVVKGIAHGCELSGCALIGGETAEMPGMYPDGEYDLAGFAVGAVEKSKIIDGSTIAEGDVVLGLASSGIHSNGFSLVRKIIERANPDLSADFHGRSLADTLMAPTRIYVKPLLALMQKLPVKGMAHITGGGLVENIPRVLREGLTAELDQNAWPLPPLFKWLQEHGGVADAEMHRVFNCGIGMAVIVSAADADAAIADLTAAGEQVWKIGTVRASREGEAQTVVA</sequence>
<name>PUR5_BURA4</name>
<gene>
    <name evidence="1" type="primary">purM</name>
    <name type="ordered locus">BamMC406_0680</name>
</gene>
<dbReference type="EC" id="6.3.3.1" evidence="1"/>
<dbReference type="EMBL" id="CP001025">
    <property type="protein sequence ID" value="ACB63176.1"/>
    <property type="molecule type" value="Genomic_DNA"/>
</dbReference>
<dbReference type="RefSeq" id="WP_012363160.1">
    <property type="nucleotide sequence ID" value="NC_010551.1"/>
</dbReference>
<dbReference type="SMR" id="B1YTV3"/>
<dbReference type="KEGG" id="bac:BamMC406_0680"/>
<dbReference type="HOGENOM" id="CLU_047116_0_0_4"/>
<dbReference type="OrthoDB" id="9777881at2"/>
<dbReference type="UniPathway" id="UPA00074">
    <property type="reaction ID" value="UER00129"/>
</dbReference>
<dbReference type="Proteomes" id="UP000001680">
    <property type="component" value="Chromosome 1"/>
</dbReference>
<dbReference type="GO" id="GO:0005829">
    <property type="term" value="C:cytosol"/>
    <property type="evidence" value="ECO:0007669"/>
    <property type="project" value="TreeGrafter"/>
</dbReference>
<dbReference type="GO" id="GO:0005524">
    <property type="term" value="F:ATP binding"/>
    <property type="evidence" value="ECO:0007669"/>
    <property type="project" value="UniProtKB-KW"/>
</dbReference>
<dbReference type="GO" id="GO:0004637">
    <property type="term" value="F:phosphoribosylamine-glycine ligase activity"/>
    <property type="evidence" value="ECO:0007669"/>
    <property type="project" value="TreeGrafter"/>
</dbReference>
<dbReference type="GO" id="GO:0004641">
    <property type="term" value="F:phosphoribosylformylglycinamidine cyclo-ligase activity"/>
    <property type="evidence" value="ECO:0007669"/>
    <property type="project" value="UniProtKB-UniRule"/>
</dbReference>
<dbReference type="GO" id="GO:0006189">
    <property type="term" value="P:'de novo' IMP biosynthetic process"/>
    <property type="evidence" value="ECO:0007669"/>
    <property type="project" value="UniProtKB-UniRule"/>
</dbReference>
<dbReference type="GO" id="GO:0046084">
    <property type="term" value="P:adenine biosynthetic process"/>
    <property type="evidence" value="ECO:0007669"/>
    <property type="project" value="TreeGrafter"/>
</dbReference>
<dbReference type="CDD" id="cd02196">
    <property type="entry name" value="PurM"/>
    <property type="match status" value="1"/>
</dbReference>
<dbReference type="FunFam" id="3.30.1330.10:FF:000001">
    <property type="entry name" value="Phosphoribosylformylglycinamidine cyclo-ligase"/>
    <property type="match status" value="1"/>
</dbReference>
<dbReference type="FunFam" id="3.90.650.10:FF:000001">
    <property type="entry name" value="Phosphoribosylformylglycinamidine cyclo-ligase"/>
    <property type="match status" value="1"/>
</dbReference>
<dbReference type="Gene3D" id="3.90.650.10">
    <property type="entry name" value="PurM-like C-terminal domain"/>
    <property type="match status" value="1"/>
</dbReference>
<dbReference type="Gene3D" id="3.30.1330.10">
    <property type="entry name" value="PurM-like, N-terminal domain"/>
    <property type="match status" value="1"/>
</dbReference>
<dbReference type="HAMAP" id="MF_00741">
    <property type="entry name" value="AIRS"/>
    <property type="match status" value="1"/>
</dbReference>
<dbReference type="InterPro" id="IPR010918">
    <property type="entry name" value="PurM-like_C_dom"/>
</dbReference>
<dbReference type="InterPro" id="IPR036676">
    <property type="entry name" value="PurM-like_C_sf"/>
</dbReference>
<dbReference type="InterPro" id="IPR016188">
    <property type="entry name" value="PurM-like_N"/>
</dbReference>
<dbReference type="InterPro" id="IPR036921">
    <property type="entry name" value="PurM-like_N_sf"/>
</dbReference>
<dbReference type="InterPro" id="IPR004733">
    <property type="entry name" value="PurM_cligase"/>
</dbReference>
<dbReference type="NCBIfam" id="TIGR00878">
    <property type="entry name" value="purM"/>
    <property type="match status" value="1"/>
</dbReference>
<dbReference type="PANTHER" id="PTHR10520:SF12">
    <property type="entry name" value="TRIFUNCTIONAL PURINE BIOSYNTHETIC PROTEIN ADENOSINE-3"/>
    <property type="match status" value="1"/>
</dbReference>
<dbReference type="PANTHER" id="PTHR10520">
    <property type="entry name" value="TRIFUNCTIONAL PURINE BIOSYNTHETIC PROTEIN ADENOSINE-3-RELATED"/>
    <property type="match status" value="1"/>
</dbReference>
<dbReference type="Pfam" id="PF00586">
    <property type="entry name" value="AIRS"/>
    <property type="match status" value="1"/>
</dbReference>
<dbReference type="Pfam" id="PF02769">
    <property type="entry name" value="AIRS_C"/>
    <property type="match status" value="1"/>
</dbReference>
<dbReference type="SUPFAM" id="SSF56042">
    <property type="entry name" value="PurM C-terminal domain-like"/>
    <property type="match status" value="1"/>
</dbReference>
<dbReference type="SUPFAM" id="SSF55326">
    <property type="entry name" value="PurM N-terminal domain-like"/>
    <property type="match status" value="1"/>
</dbReference>
<comment type="catalytic activity">
    <reaction evidence="1">
        <text>2-formamido-N(1)-(5-O-phospho-beta-D-ribosyl)acetamidine + ATP = 5-amino-1-(5-phospho-beta-D-ribosyl)imidazole + ADP + phosphate + H(+)</text>
        <dbReference type="Rhea" id="RHEA:23032"/>
        <dbReference type="ChEBI" id="CHEBI:15378"/>
        <dbReference type="ChEBI" id="CHEBI:30616"/>
        <dbReference type="ChEBI" id="CHEBI:43474"/>
        <dbReference type="ChEBI" id="CHEBI:137981"/>
        <dbReference type="ChEBI" id="CHEBI:147287"/>
        <dbReference type="ChEBI" id="CHEBI:456216"/>
        <dbReference type="EC" id="6.3.3.1"/>
    </reaction>
</comment>
<comment type="pathway">
    <text evidence="1">Purine metabolism; IMP biosynthesis via de novo pathway; 5-amino-1-(5-phospho-D-ribosyl)imidazole from N(2)-formyl-N(1)-(5-phospho-D-ribosyl)glycinamide: step 2/2.</text>
</comment>
<comment type="subcellular location">
    <subcellularLocation>
        <location evidence="1">Cytoplasm</location>
    </subcellularLocation>
</comment>
<comment type="similarity">
    <text evidence="1">Belongs to the AIR synthase family.</text>
</comment>
<accession>B1YTV3</accession>
<evidence type="ECO:0000255" key="1">
    <source>
        <dbReference type="HAMAP-Rule" id="MF_00741"/>
    </source>
</evidence>